<accession>B5EE39</accession>
<dbReference type="EC" id="6.1.1.4" evidence="1"/>
<dbReference type="EMBL" id="CP001124">
    <property type="protein sequence ID" value="ACH37777.1"/>
    <property type="molecule type" value="Genomic_DNA"/>
</dbReference>
<dbReference type="RefSeq" id="WP_012529184.1">
    <property type="nucleotide sequence ID" value="NC_011146.1"/>
</dbReference>
<dbReference type="SMR" id="B5EE39"/>
<dbReference type="STRING" id="404380.Gbem_0751"/>
<dbReference type="KEGG" id="gbm:Gbem_0751"/>
<dbReference type="eggNOG" id="COG0495">
    <property type="taxonomic scope" value="Bacteria"/>
</dbReference>
<dbReference type="HOGENOM" id="CLU_004427_0_0_7"/>
<dbReference type="OrthoDB" id="9810365at2"/>
<dbReference type="Proteomes" id="UP000008825">
    <property type="component" value="Chromosome"/>
</dbReference>
<dbReference type="GO" id="GO:0005829">
    <property type="term" value="C:cytosol"/>
    <property type="evidence" value="ECO:0007669"/>
    <property type="project" value="TreeGrafter"/>
</dbReference>
<dbReference type="GO" id="GO:0002161">
    <property type="term" value="F:aminoacyl-tRNA deacylase activity"/>
    <property type="evidence" value="ECO:0007669"/>
    <property type="project" value="InterPro"/>
</dbReference>
<dbReference type="GO" id="GO:0005524">
    <property type="term" value="F:ATP binding"/>
    <property type="evidence" value="ECO:0007669"/>
    <property type="project" value="UniProtKB-UniRule"/>
</dbReference>
<dbReference type="GO" id="GO:0004823">
    <property type="term" value="F:leucine-tRNA ligase activity"/>
    <property type="evidence" value="ECO:0007669"/>
    <property type="project" value="UniProtKB-UniRule"/>
</dbReference>
<dbReference type="GO" id="GO:0006429">
    <property type="term" value="P:leucyl-tRNA aminoacylation"/>
    <property type="evidence" value="ECO:0007669"/>
    <property type="project" value="UniProtKB-UniRule"/>
</dbReference>
<dbReference type="CDD" id="cd07958">
    <property type="entry name" value="Anticodon_Ia_Leu_BEm"/>
    <property type="match status" value="1"/>
</dbReference>
<dbReference type="CDD" id="cd00812">
    <property type="entry name" value="LeuRS_core"/>
    <property type="match status" value="1"/>
</dbReference>
<dbReference type="FunFam" id="3.10.20.590:FF:000001">
    <property type="entry name" value="Leucine--tRNA ligase"/>
    <property type="match status" value="1"/>
</dbReference>
<dbReference type="FunFam" id="3.40.50.620:FF:000003">
    <property type="entry name" value="Leucine--tRNA ligase"/>
    <property type="match status" value="1"/>
</dbReference>
<dbReference type="FunFam" id="3.40.50.620:FF:000212">
    <property type="entry name" value="Leucine--tRNA ligase"/>
    <property type="match status" value="1"/>
</dbReference>
<dbReference type="FunFam" id="1.10.730.10:FF:000011">
    <property type="entry name" value="Leucine--tRNA ligase chloroplastic/mitochondrial"/>
    <property type="match status" value="1"/>
</dbReference>
<dbReference type="Gene3D" id="3.10.20.590">
    <property type="match status" value="1"/>
</dbReference>
<dbReference type="Gene3D" id="3.40.50.620">
    <property type="entry name" value="HUPs"/>
    <property type="match status" value="2"/>
</dbReference>
<dbReference type="Gene3D" id="1.10.730.10">
    <property type="entry name" value="Isoleucyl-tRNA Synthetase, Domain 1"/>
    <property type="match status" value="1"/>
</dbReference>
<dbReference type="HAMAP" id="MF_00049_B">
    <property type="entry name" value="Leu_tRNA_synth_B"/>
    <property type="match status" value="1"/>
</dbReference>
<dbReference type="InterPro" id="IPR001412">
    <property type="entry name" value="aa-tRNA-synth_I_CS"/>
</dbReference>
<dbReference type="InterPro" id="IPR002300">
    <property type="entry name" value="aa-tRNA-synth_Ia"/>
</dbReference>
<dbReference type="InterPro" id="IPR002302">
    <property type="entry name" value="Leu-tRNA-ligase"/>
</dbReference>
<dbReference type="InterPro" id="IPR025709">
    <property type="entry name" value="Leu_tRNA-synth_edit"/>
</dbReference>
<dbReference type="InterPro" id="IPR013155">
    <property type="entry name" value="M/V/L/I-tRNA-synth_anticd-bd"/>
</dbReference>
<dbReference type="InterPro" id="IPR015413">
    <property type="entry name" value="Methionyl/Leucyl_tRNA_Synth"/>
</dbReference>
<dbReference type="InterPro" id="IPR014729">
    <property type="entry name" value="Rossmann-like_a/b/a_fold"/>
</dbReference>
<dbReference type="InterPro" id="IPR009080">
    <property type="entry name" value="tRNAsynth_Ia_anticodon-bd"/>
</dbReference>
<dbReference type="InterPro" id="IPR009008">
    <property type="entry name" value="Val/Leu/Ile-tRNA-synth_edit"/>
</dbReference>
<dbReference type="NCBIfam" id="TIGR00396">
    <property type="entry name" value="leuS_bact"/>
    <property type="match status" value="1"/>
</dbReference>
<dbReference type="PANTHER" id="PTHR43740:SF2">
    <property type="entry name" value="LEUCINE--TRNA LIGASE, MITOCHONDRIAL"/>
    <property type="match status" value="1"/>
</dbReference>
<dbReference type="PANTHER" id="PTHR43740">
    <property type="entry name" value="LEUCYL-TRNA SYNTHETASE"/>
    <property type="match status" value="1"/>
</dbReference>
<dbReference type="Pfam" id="PF08264">
    <property type="entry name" value="Anticodon_1"/>
    <property type="match status" value="1"/>
</dbReference>
<dbReference type="Pfam" id="PF00133">
    <property type="entry name" value="tRNA-synt_1"/>
    <property type="match status" value="1"/>
</dbReference>
<dbReference type="Pfam" id="PF13603">
    <property type="entry name" value="tRNA-synt_1_2"/>
    <property type="match status" value="1"/>
</dbReference>
<dbReference type="Pfam" id="PF09334">
    <property type="entry name" value="tRNA-synt_1g"/>
    <property type="match status" value="1"/>
</dbReference>
<dbReference type="PRINTS" id="PR00985">
    <property type="entry name" value="TRNASYNTHLEU"/>
</dbReference>
<dbReference type="SUPFAM" id="SSF47323">
    <property type="entry name" value="Anticodon-binding domain of a subclass of class I aminoacyl-tRNA synthetases"/>
    <property type="match status" value="1"/>
</dbReference>
<dbReference type="SUPFAM" id="SSF52374">
    <property type="entry name" value="Nucleotidylyl transferase"/>
    <property type="match status" value="1"/>
</dbReference>
<dbReference type="SUPFAM" id="SSF50677">
    <property type="entry name" value="ValRS/IleRS/LeuRS editing domain"/>
    <property type="match status" value="1"/>
</dbReference>
<dbReference type="PROSITE" id="PS00178">
    <property type="entry name" value="AA_TRNA_LIGASE_I"/>
    <property type="match status" value="1"/>
</dbReference>
<protein>
    <recommendedName>
        <fullName evidence="1">Leucine--tRNA ligase</fullName>
        <ecNumber evidence="1">6.1.1.4</ecNumber>
    </recommendedName>
    <alternativeName>
        <fullName evidence="1">Leucyl-tRNA synthetase</fullName>
        <shortName evidence="1">LeuRS</shortName>
    </alternativeName>
</protein>
<organism>
    <name type="scientific">Citrifermentans bemidjiense (strain ATCC BAA-1014 / DSM 16622 / JCM 12645 / Bem)</name>
    <name type="common">Geobacter bemidjiensis</name>
    <dbReference type="NCBI Taxonomy" id="404380"/>
    <lineage>
        <taxon>Bacteria</taxon>
        <taxon>Pseudomonadati</taxon>
        <taxon>Thermodesulfobacteriota</taxon>
        <taxon>Desulfuromonadia</taxon>
        <taxon>Geobacterales</taxon>
        <taxon>Geobacteraceae</taxon>
        <taxon>Citrifermentans</taxon>
    </lineage>
</organism>
<reference key="1">
    <citation type="submission" date="2008-07" db="EMBL/GenBank/DDBJ databases">
        <title>Complete sequence of Geobacter bemidjiensis BEM.</title>
        <authorList>
            <consortium name="US DOE Joint Genome Institute"/>
            <person name="Lucas S."/>
            <person name="Copeland A."/>
            <person name="Lapidus A."/>
            <person name="Glavina del Rio T."/>
            <person name="Dalin E."/>
            <person name="Tice H."/>
            <person name="Bruce D."/>
            <person name="Goodwin L."/>
            <person name="Pitluck S."/>
            <person name="Kiss H."/>
            <person name="Brettin T."/>
            <person name="Detter J.C."/>
            <person name="Han C."/>
            <person name="Kuske C.R."/>
            <person name="Schmutz J."/>
            <person name="Larimer F."/>
            <person name="Land M."/>
            <person name="Hauser L."/>
            <person name="Kyrpides N."/>
            <person name="Lykidis A."/>
            <person name="Lovley D."/>
            <person name="Richardson P."/>
        </authorList>
    </citation>
    <scope>NUCLEOTIDE SEQUENCE [LARGE SCALE GENOMIC DNA]</scope>
    <source>
        <strain>ATCC BAA-1014 / DSM 16622 / JCM 12645 / Bem</strain>
    </source>
</reference>
<name>SYL_CITBB</name>
<comment type="catalytic activity">
    <reaction evidence="1">
        <text>tRNA(Leu) + L-leucine + ATP = L-leucyl-tRNA(Leu) + AMP + diphosphate</text>
        <dbReference type="Rhea" id="RHEA:11688"/>
        <dbReference type="Rhea" id="RHEA-COMP:9613"/>
        <dbReference type="Rhea" id="RHEA-COMP:9622"/>
        <dbReference type="ChEBI" id="CHEBI:30616"/>
        <dbReference type="ChEBI" id="CHEBI:33019"/>
        <dbReference type="ChEBI" id="CHEBI:57427"/>
        <dbReference type="ChEBI" id="CHEBI:78442"/>
        <dbReference type="ChEBI" id="CHEBI:78494"/>
        <dbReference type="ChEBI" id="CHEBI:456215"/>
        <dbReference type="EC" id="6.1.1.4"/>
    </reaction>
</comment>
<comment type="subcellular location">
    <subcellularLocation>
        <location evidence="1">Cytoplasm</location>
    </subcellularLocation>
</comment>
<comment type="similarity">
    <text evidence="1">Belongs to the class-I aminoacyl-tRNA synthetase family.</text>
</comment>
<gene>
    <name evidence="1" type="primary">leuS</name>
    <name type="ordered locus">Gbem_0751</name>
</gene>
<keyword id="KW-0030">Aminoacyl-tRNA synthetase</keyword>
<keyword id="KW-0067">ATP-binding</keyword>
<keyword id="KW-0963">Cytoplasm</keyword>
<keyword id="KW-0436">Ligase</keyword>
<keyword id="KW-0547">Nucleotide-binding</keyword>
<keyword id="KW-0648">Protein biosynthesis</keyword>
<keyword id="KW-1185">Reference proteome</keyword>
<proteinExistence type="inferred from homology"/>
<sequence length="824" mass="92622">MEEKYVPSAVEEKWQGYWAEHKSFKANEDPSRKKYYLLEMFPYPSGKIHMGHVRNYSIGDVIARFKRMQGYNVLHPMGWDAFGMPAENAAIQHKSHPAKWTYENIAYMRGQLKTLGLSYDWDRELATCDLDYYKWEQRIFLEMYKKGLAYKKSSAVNWCPKCETVLANEQVEDGCCWRCDSPVQQKELEQWSFRITNYAQELLDDTYKLTGWPERVLTMQRNWIGRSTGCEIDFPLESGLGKIKVFTTRQDTLFGATFMSLAAEHPMALDLAGDAQKAEVAAFIDKVKKTDRIKRGAEDLEKEGVFTGSYCINPVTNTKMPIYLANFVLMDYGTGAVMAVPTHDQRDFEFAKKYNLPLKVVIQPEGETLDPATMTEAYTAEGIMVNSGRFDGMGNADAKEAIADFLEKEGIGKKTVNFRLRDWGISRQRYWGNPIPVINCDLCGVVAVPEADLPVVLPMDAEFTGEGGNPLARVDSFTTCTCPQCGETARRETDTMDTFVQSSWYFLRYCSPKFSAGPLDREKVEAWMPVDQYIGGIEHAVLHLLYARFFTKVLRDLGYCNVDEPFSNLLTQGMVIKDGAKMSKSKGNVVDPNALIERYGADTARLFSLFAAPPEKDLDWSDQGVDGSYRFLNRVWRLVYDVLPVIGDAGAVNPGELGAEAKKLRRAVHKTIKKVSEDVEERFHFNTAIAAVMELVNAIQAFSAKDAPENVAVVREAVESVVRLLAPFVPNFAEELWFQLGHASVLEAAGWPGYDAAAVVDEEVTVVIQVNGKLRSKLTVAPDAKEEEVRAQALADDKIKPYLEGKDVKKVVYVPGKLVSIVVA</sequence>
<feature type="chain" id="PRO_1000091321" description="Leucine--tRNA ligase">
    <location>
        <begin position="1"/>
        <end position="824"/>
    </location>
</feature>
<feature type="short sequence motif" description="'HIGH' region">
    <location>
        <begin position="42"/>
        <end position="52"/>
    </location>
</feature>
<feature type="short sequence motif" description="'KMSKS' region">
    <location>
        <begin position="581"/>
        <end position="585"/>
    </location>
</feature>
<feature type="binding site" evidence="1">
    <location>
        <position position="584"/>
    </location>
    <ligand>
        <name>ATP</name>
        <dbReference type="ChEBI" id="CHEBI:30616"/>
    </ligand>
</feature>
<evidence type="ECO:0000255" key="1">
    <source>
        <dbReference type="HAMAP-Rule" id="MF_00049"/>
    </source>
</evidence>